<reference key="1">
    <citation type="journal article" date="1995" name="Proc. Natl. Acad. Sci. U.S.A.">
        <title>Recombinant rat CBF-C, the third subunit of CBF/NFY, allows formation of a protein-DNA complex with CBF-A and CBF-B and with yeast HAP2 and HAP3.</title>
        <authorList>
            <person name="Sinha S."/>
            <person name="Maity S.N."/>
            <person name="Lu J."/>
            <person name="de Crombrugghe B."/>
        </authorList>
    </citation>
    <scope>NUCLEOTIDE SEQUENCE [MRNA]</scope>
    <source>
        <strain>Sprague-Dawley</strain>
        <tissue>Brain</tissue>
    </source>
</reference>
<reference key="2">
    <citation type="journal article" date="2004" name="Genome Res.">
        <title>The status, quality, and expansion of the NIH full-length cDNA project: the Mammalian Gene Collection (MGC).</title>
        <authorList>
            <consortium name="The MGC Project Team"/>
        </authorList>
    </citation>
    <scope>NUCLEOTIDE SEQUENCE [LARGE SCALE MRNA]</scope>
    <source>
        <tissue>Brain</tissue>
    </source>
</reference>
<dbReference type="EMBL" id="U17607">
    <property type="protein sequence ID" value="AAA91103.1"/>
    <property type="molecule type" value="mRNA"/>
</dbReference>
<dbReference type="EMBL" id="BC093619">
    <property type="protein sequence ID" value="AAH93619.1"/>
    <property type="molecule type" value="mRNA"/>
</dbReference>
<dbReference type="PIR" id="I59348">
    <property type="entry name" value="I59348"/>
</dbReference>
<dbReference type="RefSeq" id="NP_001416222.1">
    <property type="nucleotide sequence ID" value="NM_001429293.1"/>
</dbReference>
<dbReference type="RefSeq" id="NP_001416223.1">
    <property type="nucleotide sequence ID" value="NM_001429294.1"/>
</dbReference>
<dbReference type="RefSeq" id="NP_001416224.1">
    <property type="nucleotide sequence ID" value="NM_001429295.1"/>
</dbReference>
<dbReference type="RefSeq" id="NP_001416225.1">
    <property type="nucleotide sequence ID" value="NM_001429296.1"/>
</dbReference>
<dbReference type="RefSeq" id="NP_036998.1">
    <property type="nucleotide sequence ID" value="NM_012866.4"/>
</dbReference>
<dbReference type="RefSeq" id="XP_006238847.1">
    <property type="nucleotide sequence ID" value="XM_006238785.3"/>
</dbReference>
<dbReference type="RefSeq" id="XP_017448648.1">
    <property type="nucleotide sequence ID" value="XM_017593159.1"/>
</dbReference>
<dbReference type="SMR" id="Q62725"/>
<dbReference type="BioGRID" id="247376">
    <property type="interactions" value="1"/>
</dbReference>
<dbReference type="DIP" id="DIP-2662N"/>
<dbReference type="FunCoup" id="Q62725">
    <property type="interactions" value="2427"/>
</dbReference>
<dbReference type="STRING" id="10116.ENSRNOP00000053489"/>
<dbReference type="GlyGen" id="Q62725">
    <property type="glycosylation" value="1 site"/>
</dbReference>
<dbReference type="PhosphoSitePlus" id="Q62725"/>
<dbReference type="PaxDb" id="10116-ENSRNOP00000053489"/>
<dbReference type="Ensembl" id="ENSRNOT00000056651.5">
    <property type="protein sequence ID" value="ENSRNOP00000053489.2"/>
    <property type="gene ID" value="ENSRNOG00000010735.7"/>
</dbReference>
<dbReference type="GeneID" id="25337"/>
<dbReference type="KEGG" id="rno:25337"/>
<dbReference type="UCSC" id="RGD:3173">
    <property type="organism name" value="rat"/>
</dbReference>
<dbReference type="AGR" id="RGD:3173"/>
<dbReference type="CTD" id="4802"/>
<dbReference type="RGD" id="3173">
    <property type="gene designation" value="Nfyc"/>
</dbReference>
<dbReference type="eggNOG" id="KOG1657">
    <property type="taxonomic scope" value="Eukaryota"/>
</dbReference>
<dbReference type="GeneTree" id="ENSGT00940000155689"/>
<dbReference type="HOGENOM" id="CLU_045277_2_1_1"/>
<dbReference type="InParanoid" id="Q62725"/>
<dbReference type="OMA" id="VCCAQPP"/>
<dbReference type="OrthoDB" id="1272441at2759"/>
<dbReference type="PhylomeDB" id="Q62725"/>
<dbReference type="TreeFam" id="TF354207"/>
<dbReference type="PRO" id="PR:Q62725"/>
<dbReference type="Proteomes" id="UP000002494">
    <property type="component" value="Chromosome 5"/>
</dbReference>
<dbReference type="Bgee" id="ENSRNOG00000010735">
    <property type="expression patterns" value="Expressed in thymus and 20 other cell types or tissues"/>
</dbReference>
<dbReference type="GO" id="GO:0016602">
    <property type="term" value="C:CCAAT-binding factor complex"/>
    <property type="evidence" value="ECO:0000314"/>
    <property type="project" value="RGD"/>
</dbReference>
<dbReference type="GO" id="GO:0005654">
    <property type="term" value="C:nucleoplasm"/>
    <property type="evidence" value="ECO:0000304"/>
    <property type="project" value="Reactome"/>
</dbReference>
<dbReference type="GO" id="GO:0005634">
    <property type="term" value="C:nucleus"/>
    <property type="evidence" value="ECO:0000266"/>
    <property type="project" value="RGD"/>
</dbReference>
<dbReference type="GO" id="GO:0032993">
    <property type="term" value="C:protein-DNA complex"/>
    <property type="evidence" value="ECO:0000266"/>
    <property type="project" value="RGD"/>
</dbReference>
<dbReference type="GO" id="GO:0090575">
    <property type="term" value="C:RNA polymerase II transcription regulator complex"/>
    <property type="evidence" value="ECO:0000266"/>
    <property type="project" value="RGD"/>
</dbReference>
<dbReference type="GO" id="GO:0003677">
    <property type="term" value="F:DNA binding"/>
    <property type="evidence" value="ECO:0000266"/>
    <property type="project" value="RGD"/>
</dbReference>
<dbReference type="GO" id="GO:0001228">
    <property type="term" value="F:DNA-binding transcription activator activity, RNA polymerase II-specific"/>
    <property type="evidence" value="ECO:0000266"/>
    <property type="project" value="RGD"/>
</dbReference>
<dbReference type="GO" id="GO:0003700">
    <property type="term" value="F:DNA-binding transcription factor activity"/>
    <property type="evidence" value="ECO:0000266"/>
    <property type="project" value="RGD"/>
</dbReference>
<dbReference type="GO" id="GO:0046982">
    <property type="term" value="F:protein heterodimerization activity"/>
    <property type="evidence" value="ECO:0007669"/>
    <property type="project" value="InterPro"/>
</dbReference>
<dbReference type="GO" id="GO:0000978">
    <property type="term" value="F:RNA polymerase II cis-regulatory region sequence-specific DNA binding"/>
    <property type="evidence" value="ECO:0000266"/>
    <property type="project" value="RGD"/>
</dbReference>
<dbReference type="GO" id="GO:0045893">
    <property type="term" value="P:positive regulation of DNA-templated transcription"/>
    <property type="evidence" value="ECO:0000266"/>
    <property type="project" value="RGD"/>
</dbReference>
<dbReference type="GO" id="GO:0045944">
    <property type="term" value="P:positive regulation of transcription by RNA polymerase II"/>
    <property type="evidence" value="ECO:0000266"/>
    <property type="project" value="RGD"/>
</dbReference>
<dbReference type="GO" id="GO:0006355">
    <property type="term" value="P:regulation of DNA-templated transcription"/>
    <property type="evidence" value="ECO:0000266"/>
    <property type="project" value="RGD"/>
</dbReference>
<dbReference type="GO" id="GO:0006357">
    <property type="term" value="P:regulation of transcription by RNA polymerase II"/>
    <property type="evidence" value="ECO:0000318"/>
    <property type="project" value="GO_Central"/>
</dbReference>
<dbReference type="GO" id="GO:0006366">
    <property type="term" value="P:transcription by RNA polymerase II"/>
    <property type="evidence" value="ECO:0000305"/>
    <property type="project" value="RGD"/>
</dbReference>
<dbReference type="CDD" id="cd22908">
    <property type="entry name" value="HFD_NFYC-like"/>
    <property type="match status" value="1"/>
</dbReference>
<dbReference type="FunFam" id="1.10.20.10:FF:000006">
    <property type="entry name" value="Nuclear transcription factor Y subunit gamma"/>
    <property type="match status" value="1"/>
</dbReference>
<dbReference type="Gene3D" id="1.10.20.10">
    <property type="entry name" value="Histone, subunit A"/>
    <property type="match status" value="1"/>
</dbReference>
<dbReference type="InterPro" id="IPR009072">
    <property type="entry name" value="Histone-fold"/>
</dbReference>
<dbReference type="InterPro" id="IPR007125">
    <property type="entry name" value="Histone_H2A/H2B/H3"/>
</dbReference>
<dbReference type="InterPro" id="IPR050568">
    <property type="entry name" value="Transcr_DNA_Rep_Reg"/>
</dbReference>
<dbReference type="PANTHER" id="PTHR10252">
    <property type="entry name" value="HISTONE-LIKE TRANSCRIPTION FACTOR CCAAT-RELATED"/>
    <property type="match status" value="1"/>
</dbReference>
<dbReference type="PANTHER" id="PTHR10252:SF8">
    <property type="entry name" value="NUCLEAR TRANSCRIPTION FACTOR Y SUBUNIT GAMMA"/>
    <property type="match status" value="1"/>
</dbReference>
<dbReference type="Pfam" id="PF00125">
    <property type="entry name" value="Histone"/>
    <property type="match status" value="1"/>
</dbReference>
<dbReference type="SUPFAM" id="SSF47113">
    <property type="entry name" value="Histone-fold"/>
    <property type="match status" value="1"/>
</dbReference>
<proteinExistence type="evidence at transcript level"/>
<accession>Q62725</accession>
<accession>Q566C6</accession>
<keyword id="KW-0010">Activator</keyword>
<keyword id="KW-0238">DNA-binding</keyword>
<keyword id="KW-0539">Nucleus</keyword>
<keyword id="KW-1185">Reference proteome</keyword>
<keyword id="KW-0804">Transcription</keyword>
<keyword id="KW-0805">Transcription regulation</keyword>
<protein>
    <recommendedName>
        <fullName>Nuclear transcription factor Y subunit gamma</fullName>
    </recommendedName>
    <alternativeName>
        <fullName>CAAT box DNA-binding protein subunit C</fullName>
    </alternativeName>
    <alternativeName>
        <fullName>CCAAT-binding transcription factor subunit C</fullName>
        <shortName>CBF-C</shortName>
    </alternativeName>
    <alternativeName>
        <fullName>Nuclear transcription factor Y subunit C</fullName>
        <shortName>NF-YC</shortName>
    </alternativeName>
</protein>
<organism>
    <name type="scientific">Rattus norvegicus</name>
    <name type="common">Rat</name>
    <dbReference type="NCBI Taxonomy" id="10116"/>
    <lineage>
        <taxon>Eukaryota</taxon>
        <taxon>Metazoa</taxon>
        <taxon>Chordata</taxon>
        <taxon>Craniata</taxon>
        <taxon>Vertebrata</taxon>
        <taxon>Euteleostomi</taxon>
        <taxon>Mammalia</taxon>
        <taxon>Eutheria</taxon>
        <taxon>Euarchontoglires</taxon>
        <taxon>Glires</taxon>
        <taxon>Rodentia</taxon>
        <taxon>Myomorpha</taxon>
        <taxon>Muroidea</taxon>
        <taxon>Muridae</taxon>
        <taxon>Murinae</taxon>
        <taxon>Rattus</taxon>
    </lineage>
</organism>
<comment type="function">
    <text>Component of the sequence-specific heterotrimeric transcription factor (NF-Y) which specifically recognizes a 5'-CCAAT-3' box motif found in the promoters of its target genes. NF-Y can function as both an activator and a repressor, depending on its interacting cofactors.</text>
</comment>
<comment type="subunit">
    <text evidence="1">Heterotrimeric transcription factor composed of three components, NF-YA, NF-YB and NF-YC. NF-YB and NF-YC must interact and dimerize for NF-YA association and DNA binding (By similarity).</text>
</comment>
<comment type="subcellular location">
    <subcellularLocation>
        <location>Nucleus</location>
    </subcellularLocation>
</comment>
<comment type="similarity">
    <text evidence="2">Belongs to the NFYC/HAP5 subunit family.</text>
</comment>
<sequence length="335" mass="37254">MSTEGGFGSTSSSDAQQSLQSFWPRVMEEIRNLTVKDFRVQELPLARIKKIMKLDEDVKMISAEAPVLFAKAAQIFITELTLRAWIHTEDNKRRTLQRNDIAMAITKFDQFDFLIDIVPRDELKPPKRQEEVRQSVTPAEPVQYYFTLAQQPTAVQVQGQQQGQQTTSSTTTIQPGQIIIAQPQQGQTTPVTMQVGEGQQVQIVQAQPQGQAQQAQSGTGQTMQVMQQIITNTGEIQQIPVQLNAGQLQYIRLAQPVSGTQVVQGQIQTLATNAQQITQTEVQQGQQQFSQFTDGQQLYQIQQVTMPAGQDLAQPMFIQSANQPSDGQTPQVTGD</sequence>
<feature type="chain" id="PRO_0000218249" description="Nuclear transcription factor Y subunit gamma">
    <location>
        <begin position="1"/>
        <end position="335"/>
    </location>
</feature>
<name>NFYC_RAT</name>
<evidence type="ECO:0000250" key="1"/>
<evidence type="ECO:0000305" key="2"/>
<gene>
    <name type="primary">Nfyc</name>
</gene>